<reference key="1">
    <citation type="journal article" date="2002" name="Proc. Natl. Acad. Sci. U.S.A.">
        <title>Genome sequence of a serotype M3 strain of group A Streptococcus: phage-encoded toxins, the high-virulence phenotype, and clone emergence.</title>
        <authorList>
            <person name="Beres S.B."/>
            <person name="Sylva G.L."/>
            <person name="Barbian K.D."/>
            <person name="Lei B."/>
            <person name="Hoff J.S."/>
            <person name="Mammarella N.D."/>
            <person name="Liu M.-Y."/>
            <person name="Smoot J.C."/>
            <person name="Porcella S.F."/>
            <person name="Parkins L.D."/>
            <person name="Campbell D.S."/>
            <person name="Smith T.M."/>
            <person name="McCormick J.K."/>
            <person name="Leung D.Y.M."/>
            <person name="Schlievert P.M."/>
            <person name="Musser J.M."/>
        </authorList>
    </citation>
    <scope>NUCLEOTIDE SEQUENCE [LARGE SCALE GENOMIC DNA]</scope>
    <source>
        <strain>ATCC BAA-595 / MGAS315</strain>
    </source>
</reference>
<gene>
    <name evidence="1" type="primary">gatA</name>
    <name type="ordered locus">SpyM3_1540</name>
</gene>
<dbReference type="EC" id="6.3.5.7" evidence="1"/>
<dbReference type="EMBL" id="AE014074">
    <property type="protein sequence ID" value="AAM80147.1"/>
    <property type="molecule type" value="Genomic_DNA"/>
</dbReference>
<dbReference type="RefSeq" id="WP_011054946.1">
    <property type="nucleotide sequence ID" value="NC_004070.1"/>
</dbReference>
<dbReference type="SMR" id="P0CZ60"/>
<dbReference type="KEGG" id="spg:SpyM3_1540"/>
<dbReference type="HOGENOM" id="CLU_009600_0_3_9"/>
<dbReference type="Proteomes" id="UP000000564">
    <property type="component" value="Chromosome"/>
</dbReference>
<dbReference type="GO" id="GO:0030956">
    <property type="term" value="C:glutamyl-tRNA(Gln) amidotransferase complex"/>
    <property type="evidence" value="ECO:0007669"/>
    <property type="project" value="InterPro"/>
</dbReference>
<dbReference type="GO" id="GO:0005524">
    <property type="term" value="F:ATP binding"/>
    <property type="evidence" value="ECO:0007669"/>
    <property type="project" value="UniProtKB-KW"/>
</dbReference>
<dbReference type="GO" id="GO:0050567">
    <property type="term" value="F:glutaminyl-tRNA synthase (glutamine-hydrolyzing) activity"/>
    <property type="evidence" value="ECO:0007669"/>
    <property type="project" value="UniProtKB-UniRule"/>
</dbReference>
<dbReference type="GO" id="GO:0006412">
    <property type="term" value="P:translation"/>
    <property type="evidence" value="ECO:0007669"/>
    <property type="project" value="UniProtKB-UniRule"/>
</dbReference>
<dbReference type="Gene3D" id="3.90.1300.10">
    <property type="entry name" value="Amidase signature (AS) domain"/>
    <property type="match status" value="1"/>
</dbReference>
<dbReference type="HAMAP" id="MF_00120">
    <property type="entry name" value="GatA"/>
    <property type="match status" value="1"/>
</dbReference>
<dbReference type="InterPro" id="IPR000120">
    <property type="entry name" value="Amidase"/>
</dbReference>
<dbReference type="InterPro" id="IPR020556">
    <property type="entry name" value="Amidase_CS"/>
</dbReference>
<dbReference type="InterPro" id="IPR023631">
    <property type="entry name" value="Amidase_dom"/>
</dbReference>
<dbReference type="InterPro" id="IPR036928">
    <property type="entry name" value="AS_sf"/>
</dbReference>
<dbReference type="InterPro" id="IPR004412">
    <property type="entry name" value="GatA"/>
</dbReference>
<dbReference type="NCBIfam" id="TIGR00132">
    <property type="entry name" value="gatA"/>
    <property type="match status" value="1"/>
</dbReference>
<dbReference type="PANTHER" id="PTHR11895:SF151">
    <property type="entry name" value="GLUTAMYL-TRNA(GLN) AMIDOTRANSFERASE SUBUNIT A"/>
    <property type="match status" value="1"/>
</dbReference>
<dbReference type="PANTHER" id="PTHR11895">
    <property type="entry name" value="TRANSAMIDASE"/>
    <property type="match status" value="1"/>
</dbReference>
<dbReference type="Pfam" id="PF01425">
    <property type="entry name" value="Amidase"/>
    <property type="match status" value="1"/>
</dbReference>
<dbReference type="SUPFAM" id="SSF75304">
    <property type="entry name" value="Amidase signature (AS) enzymes"/>
    <property type="match status" value="1"/>
</dbReference>
<dbReference type="PROSITE" id="PS00571">
    <property type="entry name" value="AMIDASES"/>
    <property type="match status" value="1"/>
</dbReference>
<evidence type="ECO:0000255" key="1">
    <source>
        <dbReference type="HAMAP-Rule" id="MF_00120"/>
    </source>
</evidence>
<proteinExistence type="inferred from homology"/>
<accession>P0CZ60</accession>
<accession>Q8K617</accession>
<comment type="function">
    <text evidence="1">Allows the formation of correctly charged Gln-tRNA(Gln) through the transamidation of misacylated Glu-tRNA(Gln) in organisms which lack glutaminyl-tRNA synthetase. The reaction takes place in the presence of glutamine and ATP through an activated gamma-phospho-Glu-tRNA(Gln).</text>
</comment>
<comment type="catalytic activity">
    <reaction evidence="1">
        <text>L-glutamyl-tRNA(Gln) + L-glutamine + ATP + H2O = L-glutaminyl-tRNA(Gln) + L-glutamate + ADP + phosphate + H(+)</text>
        <dbReference type="Rhea" id="RHEA:17521"/>
        <dbReference type="Rhea" id="RHEA-COMP:9681"/>
        <dbReference type="Rhea" id="RHEA-COMP:9684"/>
        <dbReference type="ChEBI" id="CHEBI:15377"/>
        <dbReference type="ChEBI" id="CHEBI:15378"/>
        <dbReference type="ChEBI" id="CHEBI:29985"/>
        <dbReference type="ChEBI" id="CHEBI:30616"/>
        <dbReference type="ChEBI" id="CHEBI:43474"/>
        <dbReference type="ChEBI" id="CHEBI:58359"/>
        <dbReference type="ChEBI" id="CHEBI:78520"/>
        <dbReference type="ChEBI" id="CHEBI:78521"/>
        <dbReference type="ChEBI" id="CHEBI:456216"/>
        <dbReference type="EC" id="6.3.5.7"/>
    </reaction>
</comment>
<comment type="subunit">
    <text evidence="1">Heterotrimer of A, B and C subunits.</text>
</comment>
<comment type="similarity">
    <text evidence="1">Belongs to the amidase family. GatA subfamily.</text>
</comment>
<name>GATA_STRP3</name>
<feature type="chain" id="PRO_0000105214" description="Glutamyl-tRNA(Gln) amidotransferase subunit A">
    <location>
        <begin position="1"/>
        <end position="488"/>
    </location>
</feature>
<feature type="active site" description="Charge relay system" evidence="1">
    <location>
        <position position="77"/>
    </location>
</feature>
<feature type="active site" description="Charge relay system" evidence="1">
    <location>
        <position position="152"/>
    </location>
</feature>
<feature type="active site" description="Acyl-ester intermediate" evidence="1">
    <location>
        <position position="176"/>
    </location>
</feature>
<keyword id="KW-0067">ATP-binding</keyword>
<keyword id="KW-0436">Ligase</keyword>
<keyword id="KW-0547">Nucleotide-binding</keyword>
<keyword id="KW-0648">Protein biosynthesis</keyword>
<sequence>MSFNHKTIEELHDLLVAKEISATELTQKTLEDIKSREEAVGSFITVSEEAALKQAAAIDAKGIDSDNLMSGIPLAVKDNISTKGILTTAASKMLYNYEPIFDATSVANAYAKDMIVIGKTNMDEFAMGGSTETSYFKKTKNAWDHTKVPGGSSGGSATAVASGQVRLSLGSDTGGSIRQPAAFNGVVGLKPTYGTVSRYGLIAFGSSLDQIGPFAPTVKENAQLLNVVASSDVKDATSAPVRIADYTSKIGRDIKGMKIALPKEYLGEGIDPEIKETVLAAAKQFEALGATVEEVSLPHSKYGVAVYYIIASSEASSNLQRFDGIRYGFRADDAKNLDEIYVNTRSQGFGDEVKRRIMLGTFSLSSGYYDAYFKKAGQVRTLIIEDFDKVFADYDLILGPTTPTVAFGLDTLNHDPVAMYLADLLTIPVNLAGLPGISIPAGFVDGLPVGLQLIGPKYTEETIYQAAAAFEAVTDYHKQQPIIFGGDK</sequence>
<protein>
    <recommendedName>
        <fullName evidence="1">Glutamyl-tRNA(Gln) amidotransferase subunit A</fullName>
        <shortName evidence="1">Glu-ADT subunit A</shortName>
        <ecNumber evidence="1">6.3.5.7</ecNumber>
    </recommendedName>
</protein>
<organism>
    <name type="scientific">Streptococcus pyogenes serotype M3 (strain ATCC BAA-595 / MGAS315)</name>
    <dbReference type="NCBI Taxonomy" id="198466"/>
    <lineage>
        <taxon>Bacteria</taxon>
        <taxon>Bacillati</taxon>
        <taxon>Bacillota</taxon>
        <taxon>Bacilli</taxon>
        <taxon>Lactobacillales</taxon>
        <taxon>Streptococcaceae</taxon>
        <taxon>Streptococcus</taxon>
    </lineage>
</organism>